<name>ZFR_XENTR</name>
<gene>
    <name type="primary">zfr</name>
</gene>
<evidence type="ECO:0000250" key="1"/>
<evidence type="ECO:0000255" key="2">
    <source>
        <dbReference type="PROSITE-ProRule" id="PRU01040"/>
    </source>
</evidence>
<evidence type="ECO:0000256" key="3">
    <source>
        <dbReference type="SAM" id="MobiDB-lite"/>
    </source>
</evidence>
<protein>
    <recommendedName>
        <fullName>Zinc finger RNA-binding protein</fullName>
    </recommendedName>
</protein>
<reference key="1">
    <citation type="submission" date="2004-11" db="EMBL/GenBank/DDBJ databases">
        <authorList>
            <consortium name="NIH - Xenopus Gene Collection (XGC) project"/>
        </authorList>
    </citation>
    <scope>NUCLEOTIDE SEQUENCE [LARGE SCALE MRNA]</scope>
    <source>
        <tissue>Embryo</tissue>
    </source>
</reference>
<comment type="function">
    <text evidence="1">Involved in postimplantation and gastrulation stages of development. Binds to DNA and RNA (By similarity).</text>
</comment>
<comment type="subcellular location">
    <subcellularLocation>
        <location>Nucleus</location>
    </subcellularLocation>
    <subcellularLocation>
        <location evidence="1">Cytoplasm</location>
    </subcellularLocation>
</comment>
<proteinExistence type="evidence at transcript level"/>
<organism>
    <name type="scientific">Xenopus tropicalis</name>
    <name type="common">Western clawed frog</name>
    <name type="synonym">Silurana tropicalis</name>
    <dbReference type="NCBI Taxonomy" id="8364"/>
    <lineage>
        <taxon>Eukaryota</taxon>
        <taxon>Metazoa</taxon>
        <taxon>Chordata</taxon>
        <taxon>Craniata</taxon>
        <taxon>Vertebrata</taxon>
        <taxon>Euteleostomi</taxon>
        <taxon>Amphibia</taxon>
        <taxon>Batrachia</taxon>
        <taxon>Anura</taxon>
        <taxon>Pipoidea</taxon>
        <taxon>Pipidae</taxon>
        <taxon>Xenopodinae</taxon>
        <taxon>Xenopus</taxon>
        <taxon>Silurana</taxon>
    </lineage>
</organism>
<keyword id="KW-0963">Cytoplasm</keyword>
<keyword id="KW-0217">Developmental protein</keyword>
<keyword id="KW-0238">DNA-binding</keyword>
<keyword id="KW-0539">Nucleus</keyword>
<keyword id="KW-1185">Reference proteome</keyword>
<keyword id="KW-0677">Repeat</keyword>
<keyword id="KW-0694">RNA-binding</keyword>
<accession>Q5U231</accession>
<feature type="chain" id="PRO_0000312725" description="Zinc finger RNA-binding protein">
    <location>
        <begin position="1"/>
        <end position="1065"/>
    </location>
</feature>
<feature type="domain" description="DZF" evidence="2">
    <location>
        <begin position="694"/>
        <end position="1064"/>
    </location>
</feature>
<feature type="region of interest" description="Disordered" evidence="3">
    <location>
        <begin position="114"/>
        <end position="133"/>
    </location>
</feature>
<feature type="region of interest" description="Disordered" evidence="3">
    <location>
        <begin position="351"/>
        <end position="375"/>
    </location>
</feature>
<feature type="region of interest" description="Disordered" evidence="3">
    <location>
        <begin position="416"/>
        <end position="461"/>
    </location>
</feature>
<feature type="region of interest" description="Disordered" evidence="3">
    <location>
        <begin position="467"/>
        <end position="486"/>
    </location>
</feature>
<feature type="region of interest" description="Disordered" evidence="3">
    <location>
        <begin position="499"/>
        <end position="533"/>
    </location>
</feature>
<feature type="region of interest" description="Disordered" evidence="3">
    <location>
        <begin position="667"/>
        <end position="714"/>
    </location>
</feature>
<feature type="region of interest" description="Disordered" evidence="3">
    <location>
        <begin position="752"/>
        <end position="773"/>
    </location>
</feature>
<feature type="region of interest" description="Disordered" evidence="3">
    <location>
        <begin position="1032"/>
        <end position="1065"/>
    </location>
</feature>
<feature type="compositionally biased region" description="Polar residues" evidence="3">
    <location>
        <begin position="364"/>
        <end position="375"/>
    </location>
</feature>
<feature type="compositionally biased region" description="Low complexity" evidence="3">
    <location>
        <begin position="427"/>
        <end position="461"/>
    </location>
</feature>
<feature type="compositionally biased region" description="Polar residues" evidence="3">
    <location>
        <begin position="519"/>
        <end position="532"/>
    </location>
</feature>
<feature type="compositionally biased region" description="Basic and acidic residues" evidence="3">
    <location>
        <begin position="667"/>
        <end position="676"/>
    </location>
</feature>
<feature type="compositionally biased region" description="Basic and acidic residues" evidence="3">
    <location>
        <begin position="755"/>
        <end position="773"/>
    </location>
</feature>
<feature type="compositionally biased region" description="Basic and acidic residues" evidence="3">
    <location>
        <begin position="1053"/>
        <end position="1065"/>
    </location>
</feature>
<dbReference type="EMBL" id="BC086301">
    <property type="protein sequence ID" value="AAH86301.1"/>
    <property type="molecule type" value="mRNA"/>
</dbReference>
<dbReference type="RefSeq" id="NP_001011177.1">
    <property type="nucleotide sequence ID" value="NM_001011177.1"/>
</dbReference>
<dbReference type="RefSeq" id="XP_012816351.1">
    <property type="nucleotide sequence ID" value="XM_012960897.3"/>
</dbReference>
<dbReference type="SMR" id="Q5U231"/>
<dbReference type="FunCoup" id="Q5U231">
    <property type="interactions" value="3780"/>
</dbReference>
<dbReference type="STRING" id="8364.ENSXETP00000024832"/>
<dbReference type="PaxDb" id="8364-ENSXETP00000034043"/>
<dbReference type="DNASU" id="496597"/>
<dbReference type="GeneID" id="496597"/>
<dbReference type="KEGG" id="xtr:496597"/>
<dbReference type="AGR" id="Xenbase:XB-GENE-6067390"/>
<dbReference type="CTD" id="51663"/>
<dbReference type="Xenbase" id="XB-GENE-6067390">
    <property type="gene designation" value="zfr"/>
</dbReference>
<dbReference type="eggNOG" id="KOG3792">
    <property type="taxonomic scope" value="Eukaryota"/>
</dbReference>
<dbReference type="InParanoid" id="Q5U231"/>
<dbReference type="OrthoDB" id="8898434at2759"/>
<dbReference type="Proteomes" id="UP000008143">
    <property type="component" value="Chromosome 1"/>
</dbReference>
<dbReference type="Bgee" id="ENSXETG00000015598">
    <property type="expression patterns" value="Expressed in neurula embryo and 16 other cell types or tissues"/>
</dbReference>
<dbReference type="GO" id="GO:0005737">
    <property type="term" value="C:cytoplasm"/>
    <property type="evidence" value="ECO:0007669"/>
    <property type="project" value="UniProtKB-SubCell"/>
</dbReference>
<dbReference type="GO" id="GO:0005634">
    <property type="term" value="C:nucleus"/>
    <property type="evidence" value="ECO:0007669"/>
    <property type="project" value="UniProtKB-SubCell"/>
</dbReference>
<dbReference type="GO" id="GO:0003677">
    <property type="term" value="F:DNA binding"/>
    <property type="evidence" value="ECO:0007669"/>
    <property type="project" value="UniProtKB-KW"/>
</dbReference>
<dbReference type="GO" id="GO:0003723">
    <property type="term" value="F:RNA binding"/>
    <property type="evidence" value="ECO:0007669"/>
    <property type="project" value="UniProtKB-KW"/>
</dbReference>
<dbReference type="GO" id="GO:0008270">
    <property type="term" value="F:zinc ion binding"/>
    <property type="evidence" value="ECO:0007669"/>
    <property type="project" value="InterPro"/>
</dbReference>
<dbReference type="FunFam" id="1.10.1410.40:FF:000001">
    <property type="entry name" value="interleukin enhancer-binding factor 3 isoform X1"/>
    <property type="match status" value="1"/>
</dbReference>
<dbReference type="FunFam" id="3.30.160.60:FF:000153">
    <property type="entry name" value="Zinc finger RNA-binding protein 2"/>
    <property type="match status" value="1"/>
</dbReference>
<dbReference type="FunFam" id="3.30.160.60:FF:000210">
    <property type="entry name" value="Zinc finger RNA-binding protein 2"/>
    <property type="match status" value="1"/>
</dbReference>
<dbReference type="FunFam" id="3.30.160.60:FF:000439">
    <property type="entry name" value="Zinc finger RNA-binding protein 2"/>
    <property type="match status" value="1"/>
</dbReference>
<dbReference type="FunFam" id="3.30.460.10:FF:000010">
    <property type="entry name" value="Zinc finger RNA-binding protein 2"/>
    <property type="match status" value="1"/>
</dbReference>
<dbReference type="Gene3D" id="1.10.1410.40">
    <property type="match status" value="1"/>
</dbReference>
<dbReference type="Gene3D" id="3.30.460.10">
    <property type="entry name" value="Beta Polymerase, domain 2"/>
    <property type="match status" value="1"/>
</dbReference>
<dbReference type="Gene3D" id="3.30.160.60">
    <property type="entry name" value="Classic Zinc Finger"/>
    <property type="match status" value="3"/>
</dbReference>
<dbReference type="InterPro" id="IPR006561">
    <property type="entry name" value="DZF_dom"/>
</dbReference>
<dbReference type="InterPro" id="IPR049402">
    <property type="entry name" value="DZF_dom_C"/>
</dbReference>
<dbReference type="InterPro" id="IPR049401">
    <property type="entry name" value="DZF_dom_N"/>
</dbReference>
<dbReference type="InterPro" id="IPR003604">
    <property type="entry name" value="Matrin/U1-like-C_Znf_C2H2"/>
</dbReference>
<dbReference type="InterPro" id="IPR043519">
    <property type="entry name" value="NT_sf"/>
</dbReference>
<dbReference type="InterPro" id="IPR036236">
    <property type="entry name" value="Znf_C2H2_sf"/>
</dbReference>
<dbReference type="InterPro" id="IPR013087">
    <property type="entry name" value="Znf_C2H2_type"/>
</dbReference>
<dbReference type="PANTHER" id="PTHR45762">
    <property type="entry name" value="ZINC FINGER RNA-BINDING PROTEIN"/>
    <property type="match status" value="1"/>
</dbReference>
<dbReference type="PANTHER" id="PTHR45762:SF21">
    <property type="entry name" value="ZINC FINGER RNA-BINDING PROTEIN"/>
    <property type="match status" value="1"/>
</dbReference>
<dbReference type="Pfam" id="PF20965">
    <property type="entry name" value="DZF_C"/>
    <property type="match status" value="1"/>
</dbReference>
<dbReference type="Pfam" id="PF07528">
    <property type="entry name" value="DZF_N"/>
    <property type="match status" value="1"/>
</dbReference>
<dbReference type="Pfam" id="PF12874">
    <property type="entry name" value="zf-met"/>
    <property type="match status" value="3"/>
</dbReference>
<dbReference type="SMART" id="SM00572">
    <property type="entry name" value="DZF"/>
    <property type="match status" value="1"/>
</dbReference>
<dbReference type="SMART" id="SM00355">
    <property type="entry name" value="ZnF_C2H2"/>
    <property type="match status" value="3"/>
</dbReference>
<dbReference type="SMART" id="SM00451">
    <property type="entry name" value="ZnF_U1"/>
    <property type="match status" value="3"/>
</dbReference>
<dbReference type="SUPFAM" id="SSF57667">
    <property type="entry name" value="beta-beta-alpha zinc fingers"/>
    <property type="match status" value="3"/>
</dbReference>
<dbReference type="PROSITE" id="PS51703">
    <property type="entry name" value="DZF"/>
    <property type="match status" value="1"/>
</dbReference>
<dbReference type="PROSITE" id="PS00028">
    <property type="entry name" value="ZINC_FINGER_C2H2_1"/>
    <property type="match status" value="3"/>
</dbReference>
<sequence>MIPICPVVSFTYVPSRLGEEAKMATGNYFGFTHGAAAQYSQQPASGVAYSHPTTVASYTVHQAPVAAHTVTAAYAPAAATVAVARPAPVAVAAAATAAAYGGYPAAHTATDYGYTQRQQEAPPPPPPVTTQNYQDSYSYVRSTAPAVAYDSKQYYQQPTATVAAAAQPQPAVAETYYQTAPIALSLPVAPKAGYSQGAAQYTQAQQTRQVTAIKPANPSPATTTFSIYPVSSTVQPVAAAATVVPSYTQSATYSTTAVTYSGAAYSGYEAAVYSAASSYYQQQQQQQQKQAAAAAAAAATAAWTGTNFTKKPQFQNKQLKPKQPPKPPQIHYCDVCKISCAGPQTYKEHLEGQKHKKKEAALKASQNTTSSSTAVRGTQNQLRCELCDVSCTGADAYAAHIRGAKHQKVVKLHTKLGKPIPSTEPNVVSQSVTSAAVSKPSTTSSSTSGANGSSSVGASPSVKLLTSSSSLSTSSSSKASSMSSTSIVKKVTTPKITFIGGNKLQSTGNKVDDSKMSDSAKTTPSTAAQTQEAKIDPMSEAAQTLAALQSDVQPVGHDYVEEVRNDEGKVIRFHCKLCECSFNDPNAKEMHLKGRRHRLQYKKKVNPDLQVEVKPSIRARKIQEEKMRKQMQKEEYWRRREEEERWRMEMRRYEEDMYWRRMEEEQHHWDDRRRVPEGGYPHGPPGPPGLLGVRPGMPPQPQGPSPLRRPDSSDDRYVMTKHAAIYPTEEELQAVQKIVSLTERALKLVSDSMADQDKSKTKESDDKKEPSKERALKGVLRVGVLAKGLLLRGDRNVSLVLLCAEKPTRALLSRITESLPKQLAVICPEKYEVSCSLAEAAIILNSCVEPKMQVTITLTSPVIREENLRDGDVTPGMVKDPPDVLDRQKCLDALAALRHAKWFQARANGLQSCVIIIRILRDLCQRVPTWSDFPSWALELLVEKAISSSSGPQSPGDALRRVFECISSGIILKGGPGLLDPCEKDPYDTLATMNDQQREDITSSAQFALRLLAFRQIYKVLGMDPLSQMNQRFNVHNNRKRRRDSDGVDSFEAEGKKDKKDYDNF</sequence>